<proteinExistence type="inferred from homology"/>
<keyword id="KW-0963">Cytoplasm</keyword>
<keyword id="KW-1185">Reference proteome</keyword>
<keyword id="KW-0694">RNA-binding</keyword>
<keyword id="KW-0808">Transferase</keyword>
<keyword id="KW-0819">tRNA processing</keyword>
<keyword id="KW-0820">tRNA-binding</keyword>
<organism>
    <name type="scientific">Drosophila ananassae</name>
    <name type="common">Fruit fly</name>
    <dbReference type="NCBI Taxonomy" id="7217"/>
    <lineage>
        <taxon>Eukaryota</taxon>
        <taxon>Metazoa</taxon>
        <taxon>Ecdysozoa</taxon>
        <taxon>Arthropoda</taxon>
        <taxon>Hexapoda</taxon>
        <taxon>Insecta</taxon>
        <taxon>Pterygota</taxon>
        <taxon>Neoptera</taxon>
        <taxon>Endopterygota</taxon>
        <taxon>Diptera</taxon>
        <taxon>Brachycera</taxon>
        <taxon>Muscomorpha</taxon>
        <taxon>Ephydroidea</taxon>
        <taxon>Drosophilidae</taxon>
        <taxon>Drosophila</taxon>
        <taxon>Sophophora</taxon>
    </lineage>
</organism>
<evidence type="ECO:0000255" key="1">
    <source>
        <dbReference type="HAMAP-Rule" id="MF_03053"/>
    </source>
</evidence>
<comment type="function">
    <text evidence="1">Plays a central role in 2-thiolation of mcm(5)S(2)U at tRNA wobble positions of tRNA(Lys), tRNA(Glu) and tRNA(Gln). Directly binds tRNAs and probably acts by catalyzing adenylation of tRNAs, an intermediate required for 2-thiolation. It is unclear whether it acts as a sulfurtransferase that transfers sulfur from thiocarboxylated URM1 onto the uridine of tRNAs at wobble position.</text>
</comment>
<comment type="pathway">
    <text evidence="1">tRNA modification; 5-methoxycarbonylmethyl-2-thiouridine-tRNA biosynthesis.</text>
</comment>
<comment type="subcellular location">
    <subcellularLocation>
        <location evidence="1">Cytoplasm</location>
    </subcellularLocation>
</comment>
<comment type="similarity">
    <text evidence="1">Belongs to the TtcA family. CTU1/NCS6/ATPBD3 subfamily.</text>
</comment>
<sequence>MPISCKSRCGNRAALKRPKTGDALCKECFFAAFEAEIHHTISSSNLFRRGEKVAVAASGGKDSTVLAHVLKLLNERHDYGLDLVLLSIDEGITGYRDDSLETVKQNRDDYQMPLKILSYEELYGWTMDRIVAQIGRSNNCTFCGVFRRQALDRGAKLLGVDSIATGHNADDIAETVLMNILRGDTARLRRCTDIKTGGGEDSIPRVKPLKYSYEKEIVMYAHYKKLVYFSTECVFAPNAYRGHARAFLKDLEKVRPSVIMDIIYSGEQLRFKDTVKKPVRGICTRCGFVSSQQPCKACVLLEGLNRGLPKLGIGKKSKGDRMIAKQNQELALRERANLVKNDF</sequence>
<accession>B3MI77</accession>
<reference key="1">
    <citation type="journal article" date="2007" name="Nature">
        <title>Evolution of genes and genomes on the Drosophila phylogeny.</title>
        <authorList>
            <consortium name="Drosophila 12 genomes consortium"/>
        </authorList>
    </citation>
    <scope>NUCLEOTIDE SEQUENCE [LARGE SCALE GENOMIC DNA]</scope>
    <source>
        <strain>Tucson 14024-0371.13</strain>
    </source>
</reference>
<feature type="chain" id="PRO_0000368248" description="Cytoplasmic tRNA 2-thiolation protein 1">
    <location>
        <begin position="1"/>
        <end position="343"/>
    </location>
</feature>
<protein>
    <recommendedName>
        <fullName evidence="1">Cytoplasmic tRNA 2-thiolation protein 1</fullName>
        <ecNumber evidence="1">2.7.7.-</ecNumber>
    </recommendedName>
    <alternativeName>
        <fullName evidence="1">Cytoplasmic tRNA adenylyltransferase 1</fullName>
    </alternativeName>
</protein>
<dbReference type="EC" id="2.7.7.-" evidence="1"/>
<dbReference type="EMBL" id="CH902619">
    <property type="protein sequence ID" value="EDV35922.1"/>
    <property type="molecule type" value="Genomic_DNA"/>
</dbReference>
<dbReference type="SMR" id="B3MI77"/>
<dbReference type="FunCoup" id="B3MI77">
    <property type="interactions" value="436"/>
</dbReference>
<dbReference type="STRING" id="7217.B3MI77"/>
<dbReference type="EnsemblMetazoa" id="FBtr0117410">
    <property type="protein sequence ID" value="FBpp0115902"/>
    <property type="gene ID" value="FBgn0089744"/>
</dbReference>
<dbReference type="EnsemblMetazoa" id="XM_001959064.4">
    <property type="protein sequence ID" value="XP_001959100.1"/>
    <property type="gene ID" value="LOC6495557"/>
</dbReference>
<dbReference type="GeneID" id="6495557"/>
<dbReference type="KEGG" id="dan:6495557"/>
<dbReference type="CTD" id="90353"/>
<dbReference type="eggNOG" id="KOG2840">
    <property type="taxonomic scope" value="Eukaryota"/>
</dbReference>
<dbReference type="HOGENOM" id="CLU_026481_1_2_1"/>
<dbReference type="InParanoid" id="B3MI77"/>
<dbReference type="OMA" id="KPVRGIC"/>
<dbReference type="OrthoDB" id="198857at2759"/>
<dbReference type="PhylomeDB" id="B3MI77"/>
<dbReference type="UniPathway" id="UPA00988"/>
<dbReference type="Proteomes" id="UP000007801">
    <property type="component" value="Unassembled WGS sequence"/>
</dbReference>
<dbReference type="GO" id="GO:0005829">
    <property type="term" value="C:cytosol"/>
    <property type="evidence" value="ECO:0000250"/>
    <property type="project" value="UniProtKB"/>
</dbReference>
<dbReference type="GO" id="GO:0002144">
    <property type="term" value="C:cytosolic tRNA wobble base thiouridylase complex"/>
    <property type="evidence" value="ECO:0007669"/>
    <property type="project" value="TreeGrafter"/>
</dbReference>
<dbReference type="GO" id="GO:0005739">
    <property type="term" value="C:mitochondrion"/>
    <property type="evidence" value="ECO:0007669"/>
    <property type="project" value="TreeGrafter"/>
</dbReference>
<dbReference type="GO" id="GO:0016779">
    <property type="term" value="F:nucleotidyltransferase activity"/>
    <property type="evidence" value="ECO:0007669"/>
    <property type="project" value="UniProtKB-UniRule"/>
</dbReference>
<dbReference type="GO" id="GO:0000049">
    <property type="term" value="F:tRNA binding"/>
    <property type="evidence" value="ECO:0000250"/>
    <property type="project" value="UniProtKB"/>
</dbReference>
<dbReference type="GO" id="GO:0032447">
    <property type="term" value="P:protein urmylation"/>
    <property type="evidence" value="ECO:0007669"/>
    <property type="project" value="UniProtKB-UniRule"/>
</dbReference>
<dbReference type="GO" id="GO:0034227">
    <property type="term" value="P:tRNA thio-modification"/>
    <property type="evidence" value="ECO:0000250"/>
    <property type="project" value="UniProtKB"/>
</dbReference>
<dbReference type="GO" id="GO:0002143">
    <property type="term" value="P:tRNA wobble position uridine thiolation"/>
    <property type="evidence" value="ECO:0007669"/>
    <property type="project" value="TreeGrafter"/>
</dbReference>
<dbReference type="GO" id="GO:0002098">
    <property type="term" value="P:tRNA wobble uridine modification"/>
    <property type="evidence" value="ECO:0000250"/>
    <property type="project" value="UniProtKB"/>
</dbReference>
<dbReference type="CDD" id="cd01713">
    <property type="entry name" value="CTU1-like"/>
    <property type="match status" value="1"/>
</dbReference>
<dbReference type="FunFam" id="3.40.50.620:FF:000054">
    <property type="entry name" value="Cytoplasmic tRNA 2-thiolation protein 1"/>
    <property type="match status" value="1"/>
</dbReference>
<dbReference type="Gene3D" id="3.40.50.620">
    <property type="entry name" value="HUPs"/>
    <property type="match status" value="1"/>
</dbReference>
<dbReference type="HAMAP" id="MF_03053">
    <property type="entry name" value="CTU1"/>
    <property type="match status" value="1"/>
</dbReference>
<dbReference type="InterPro" id="IPR056369">
    <property type="entry name" value="CTU1-like_ATP-bd"/>
</dbReference>
<dbReference type="InterPro" id="IPR032442">
    <property type="entry name" value="CTU1_C"/>
</dbReference>
<dbReference type="InterPro" id="IPR000541">
    <property type="entry name" value="Ncs6/Tuc1/Ctu1"/>
</dbReference>
<dbReference type="InterPro" id="IPR014729">
    <property type="entry name" value="Rossmann-like_a/b/a_fold"/>
</dbReference>
<dbReference type="InterPro" id="IPR011063">
    <property type="entry name" value="TilS/TtcA_N"/>
</dbReference>
<dbReference type="InterPro" id="IPR035107">
    <property type="entry name" value="tRNA_thiolation_TtcA_Ctu1"/>
</dbReference>
<dbReference type="InterPro" id="IPR020554">
    <property type="entry name" value="UPF0021_CS"/>
</dbReference>
<dbReference type="NCBIfam" id="TIGR00269">
    <property type="entry name" value="TIGR00269 family protein"/>
    <property type="match status" value="1"/>
</dbReference>
<dbReference type="PANTHER" id="PTHR11807">
    <property type="entry name" value="ATPASES OF THE PP SUPERFAMILY-RELATED"/>
    <property type="match status" value="1"/>
</dbReference>
<dbReference type="PANTHER" id="PTHR11807:SF12">
    <property type="entry name" value="CYTOPLASMIC TRNA 2-THIOLATION PROTEIN 1"/>
    <property type="match status" value="1"/>
</dbReference>
<dbReference type="Pfam" id="PF01171">
    <property type="entry name" value="ATP_bind_3"/>
    <property type="match status" value="1"/>
</dbReference>
<dbReference type="Pfam" id="PF16503">
    <property type="entry name" value="zn-ribbon_14"/>
    <property type="match status" value="1"/>
</dbReference>
<dbReference type="PIRSF" id="PIRSF004976">
    <property type="entry name" value="ATPase_YdaO"/>
    <property type="match status" value="1"/>
</dbReference>
<dbReference type="SUPFAM" id="SSF52402">
    <property type="entry name" value="Adenine nucleotide alpha hydrolases-like"/>
    <property type="match status" value="1"/>
</dbReference>
<dbReference type="PROSITE" id="PS01263">
    <property type="entry name" value="UPF0021"/>
    <property type="match status" value="1"/>
</dbReference>
<gene>
    <name type="ORF">GF12710</name>
</gene>
<name>CTU1_DROAN</name>